<protein>
    <recommendedName>
        <fullName>Cytochrome b</fullName>
    </recommendedName>
    <alternativeName>
        <fullName>Complex III subunit 3</fullName>
    </alternativeName>
    <alternativeName>
        <fullName>Complex III subunit III</fullName>
    </alternativeName>
    <alternativeName>
        <fullName>Cytochrome b-c1 complex subunit 3</fullName>
    </alternativeName>
    <alternativeName>
        <fullName>Ubiquinol-cytochrome-c reductase complex cytochrome b subunit</fullName>
    </alternativeName>
</protein>
<comment type="function">
    <text evidence="2">Component of the ubiquinol-cytochrome c reductase complex (complex III or cytochrome b-c1 complex) that is part of the mitochondrial respiratory chain. The b-c1 complex mediates electron transfer from ubiquinol to cytochrome c. Contributes to the generation of a proton gradient across the mitochondrial membrane that is then used for ATP synthesis.</text>
</comment>
<comment type="cofactor">
    <cofactor evidence="2">
        <name>heme b</name>
        <dbReference type="ChEBI" id="CHEBI:60344"/>
    </cofactor>
    <text evidence="2">Binds 2 heme b groups non-covalently.</text>
</comment>
<comment type="subunit">
    <text evidence="2">The cytochrome bc1 complex contains 11 subunits: 3 respiratory subunits (MT-CYB, CYC1 and UQCRFS1), 2 core proteins (UQCRC1 and UQCRC2) and 6 low-molecular weight proteins (UQCRH/QCR6, UQCRB/QCR7, UQCRQ/QCR8, UQCR10/QCR9, UQCR11/QCR10 and a cleavage product of UQCRFS1). This cytochrome bc1 complex then forms a dimer.</text>
</comment>
<comment type="subcellular location">
    <subcellularLocation>
        <location evidence="2">Mitochondrion inner membrane</location>
        <topology evidence="2">Multi-pass membrane protein</topology>
    </subcellularLocation>
</comment>
<comment type="miscellaneous">
    <text evidence="1">Heme 1 (or BL or b562) is low-potential and absorbs at about 562 nm, and heme 2 (or BH or b566) is high-potential and absorbs at about 566 nm.</text>
</comment>
<comment type="similarity">
    <text evidence="3 4">Belongs to the cytochrome b family.</text>
</comment>
<comment type="caution">
    <text evidence="2">The full-length protein contains only eight transmembrane helices, not nine as predicted by bioinformatics tools.</text>
</comment>
<evidence type="ECO:0000250" key="1"/>
<evidence type="ECO:0000250" key="2">
    <source>
        <dbReference type="UniProtKB" id="P00157"/>
    </source>
</evidence>
<evidence type="ECO:0000255" key="3">
    <source>
        <dbReference type="PROSITE-ProRule" id="PRU00967"/>
    </source>
</evidence>
<evidence type="ECO:0000255" key="4">
    <source>
        <dbReference type="PROSITE-ProRule" id="PRU00968"/>
    </source>
</evidence>
<gene>
    <name type="primary">MT-CYB</name>
    <name type="synonym">COB</name>
    <name type="synonym">CYTB</name>
    <name type="synonym">MTCYB</name>
</gene>
<dbReference type="EMBL" id="AF376858">
    <property type="protein sequence ID" value="AAK57677.1"/>
    <property type="molecule type" value="Genomic_DNA"/>
</dbReference>
<dbReference type="GO" id="GO:0005743">
    <property type="term" value="C:mitochondrial inner membrane"/>
    <property type="evidence" value="ECO:0007669"/>
    <property type="project" value="UniProtKB-SubCell"/>
</dbReference>
<dbReference type="GO" id="GO:0045275">
    <property type="term" value="C:respiratory chain complex III"/>
    <property type="evidence" value="ECO:0007669"/>
    <property type="project" value="InterPro"/>
</dbReference>
<dbReference type="GO" id="GO:0046872">
    <property type="term" value="F:metal ion binding"/>
    <property type="evidence" value="ECO:0007669"/>
    <property type="project" value="UniProtKB-KW"/>
</dbReference>
<dbReference type="GO" id="GO:0008121">
    <property type="term" value="F:ubiquinol-cytochrome-c reductase activity"/>
    <property type="evidence" value="ECO:0007669"/>
    <property type="project" value="InterPro"/>
</dbReference>
<dbReference type="GO" id="GO:0006122">
    <property type="term" value="P:mitochondrial electron transport, ubiquinol to cytochrome c"/>
    <property type="evidence" value="ECO:0007669"/>
    <property type="project" value="TreeGrafter"/>
</dbReference>
<dbReference type="CDD" id="cd00290">
    <property type="entry name" value="cytochrome_b_C"/>
    <property type="match status" value="1"/>
</dbReference>
<dbReference type="CDD" id="cd00284">
    <property type="entry name" value="Cytochrome_b_N"/>
    <property type="match status" value="1"/>
</dbReference>
<dbReference type="FunFam" id="1.20.810.10:FF:000002">
    <property type="entry name" value="Cytochrome b"/>
    <property type="match status" value="1"/>
</dbReference>
<dbReference type="Gene3D" id="1.20.810.10">
    <property type="entry name" value="Cytochrome Bc1 Complex, Chain C"/>
    <property type="match status" value="1"/>
</dbReference>
<dbReference type="InterPro" id="IPR005798">
    <property type="entry name" value="Cyt_b/b6_C"/>
</dbReference>
<dbReference type="InterPro" id="IPR036150">
    <property type="entry name" value="Cyt_b/b6_C_sf"/>
</dbReference>
<dbReference type="InterPro" id="IPR005797">
    <property type="entry name" value="Cyt_b/b6_N"/>
</dbReference>
<dbReference type="InterPro" id="IPR027387">
    <property type="entry name" value="Cytb/b6-like_sf"/>
</dbReference>
<dbReference type="InterPro" id="IPR030689">
    <property type="entry name" value="Cytochrome_b"/>
</dbReference>
<dbReference type="InterPro" id="IPR048260">
    <property type="entry name" value="Cytochrome_b_C_euk/bac"/>
</dbReference>
<dbReference type="InterPro" id="IPR048259">
    <property type="entry name" value="Cytochrome_b_N_euk/bac"/>
</dbReference>
<dbReference type="InterPro" id="IPR016174">
    <property type="entry name" value="Di-haem_cyt_TM"/>
</dbReference>
<dbReference type="PANTHER" id="PTHR19271">
    <property type="entry name" value="CYTOCHROME B"/>
    <property type="match status" value="1"/>
</dbReference>
<dbReference type="PANTHER" id="PTHR19271:SF16">
    <property type="entry name" value="CYTOCHROME B"/>
    <property type="match status" value="1"/>
</dbReference>
<dbReference type="Pfam" id="PF00032">
    <property type="entry name" value="Cytochrom_B_C"/>
    <property type="match status" value="1"/>
</dbReference>
<dbReference type="Pfam" id="PF00033">
    <property type="entry name" value="Cytochrome_B"/>
    <property type="match status" value="1"/>
</dbReference>
<dbReference type="PIRSF" id="PIRSF038885">
    <property type="entry name" value="COB"/>
    <property type="match status" value="1"/>
</dbReference>
<dbReference type="SUPFAM" id="SSF81648">
    <property type="entry name" value="a domain/subunit of cytochrome bc1 complex (Ubiquinol-cytochrome c reductase)"/>
    <property type="match status" value="1"/>
</dbReference>
<dbReference type="SUPFAM" id="SSF81342">
    <property type="entry name" value="Transmembrane di-heme cytochromes"/>
    <property type="match status" value="1"/>
</dbReference>
<dbReference type="PROSITE" id="PS51003">
    <property type="entry name" value="CYTB_CTER"/>
    <property type="match status" value="1"/>
</dbReference>
<dbReference type="PROSITE" id="PS51002">
    <property type="entry name" value="CYTB_NTER"/>
    <property type="match status" value="1"/>
</dbReference>
<proteinExistence type="inferred from homology"/>
<geneLocation type="mitochondrion"/>
<accession>Q957A4</accession>
<keyword id="KW-0249">Electron transport</keyword>
<keyword id="KW-0349">Heme</keyword>
<keyword id="KW-0408">Iron</keyword>
<keyword id="KW-0472">Membrane</keyword>
<keyword id="KW-0479">Metal-binding</keyword>
<keyword id="KW-0496">Mitochondrion</keyword>
<keyword id="KW-0999">Mitochondrion inner membrane</keyword>
<keyword id="KW-0679">Respiratory chain</keyword>
<keyword id="KW-0812">Transmembrane</keyword>
<keyword id="KW-1133">Transmembrane helix</keyword>
<keyword id="KW-0813">Transport</keyword>
<keyword id="KW-0830">Ubiquinone</keyword>
<reference key="1">
    <citation type="journal article" date="2001" name="Mol. Phylogenet. Evol.">
        <title>Molecular systematics of bats of the genus Myotis (Vespertilionidae) suggests deterministic ecomorphological convergences.</title>
        <authorList>
            <person name="Ruedi M."/>
            <person name="Mayer F."/>
        </authorList>
    </citation>
    <scope>NUCLEOTIDE SEQUENCE [GENOMIC DNA]</scope>
    <source>
        <strain>Isolate SMF 69341</strain>
    </source>
</reference>
<feature type="chain" id="PRO_0000061245" description="Cytochrome b">
    <location>
        <begin position="1"/>
        <end position="379"/>
    </location>
</feature>
<feature type="transmembrane region" description="Helical" evidence="2">
    <location>
        <begin position="33"/>
        <end position="53"/>
    </location>
</feature>
<feature type="transmembrane region" description="Helical" evidence="2">
    <location>
        <begin position="77"/>
        <end position="98"/>
    </location>
</feature>
<feature type="transmembrane region" description="Helical" evidence="2">
    <location>
        <begin position="113"/>
        <end position="133"/>
    </location>
</feature>
<feature type="transmembrane region" description="Helical" evidence="2">
    <location>
        <begin position="178"/>
        <end position="198"/>
    </location>
</feature>
<feature type="transmembrane region" description="Helical" evidence="2">
    <location>
        <begin position="226"/>
        <end position="246"/>
    </location>
</feature>
<feature type="transmembrane region" description="Helical" evidence="2">
    <location>
        <begin position="288"/>
        <end position="308"/>
    </location>
</feature>
<feature type="transmembrane region" description="Helical" evidence="2">
    <location>
        <begin position="320"/>
        <end position="340"/>
    </location>
</feature>
<feature type="transmembrane region" description="Helical" evidence="2">
    <location>
        <begin position="347"/>
        <end position="367"/>
    </location>
</feature>
<feature type="binding site" description="axial binding residue" evidence="2">
    <location>
        <position position="83"/>
    </location>
    <ligand>
        <name>heme b</name>
        <dbReference type="ChEBI" id="CHEBI:60344"/>
        <label>b562</label>
    </ligand>
    <ligandPart>
        <name>Fe</name>
        <dbReference type="ChEBI" id="CHEBI:18248"/>
    </ligandPart>
</feature>
<feature type="binding site" description="axial binding residue" evidence="2">
    <location>
        <position position="97"/>
    </location>
    <ligand>
        <name>heme b</name>
        <dbReference type="ChEBI" id="CHEBI:60344"/>
        <label>b566</label>
    </ligand>
    <ligandPart>
        <name>Fe</name>
        <dbReference type="ChEBI" id="CHEBI:18248"/>
    </ligandPart>
</feature>
<feature type="binding site" description="axial binding residue" evidence="2">
    <location>
        <position position="182"/>
    </location>
    <ligand>
        <name>heme b</name>
        <dbReference type="ChEBI" id="CHEBI:60344"/>
        <label>b562</label>
    </ligand>
    <ligandPart>
        <name>Fe</name>
        <dbReference type="ChEBI" id="CHEBI:18248"/>
    </ligandPart>
</feature>
<feature type="binding site" description="axial binding residue" evidence="2">
    <location>
        <position position="196"/>
    </location>
    <ligand>
        <name>heme b</name>
        <dbReference type="ChEBI" id="CHEBI:60344"/>
        <label>b566</label>
    </ligand>
    <ligandPart>
        <name>Fe</name>
        <dbReference type="ChEBI" id="CHEBI:18248"/>
    </ligandPart>
</feature>
<feature type="binding site" evidence="2">
    <location>
        <position position="201"/>
    </location>
    <ligand>
        <name>a ubiquinone</name>
        <dbReference type="ChEBI" id="CHEBI:16389"/>
    </ligand>
</feature>
<organism>
    <name type="scientific">Myotis montivagus</name>
    <name type="common">Burmese whiskered bat</name>
    <name type="synonym">Dark-whiskered bat</name>
    <dbReference type="NCBI Taxonomy" id="159329"/>
    <lineage>
        <taxon>Eukaryota</taxon>
        <taxon>Metazoa</taxon>
        <taxon>Chordata</taxon>
        <taxon>Craniata</taxon>
        <taxon>Vertebrata</taxon>
        <taxon>Euteleostomi</taxon>
        <taxon>Mammalia</taxon>
        <taxon>Eutheria</taxon>
        <taxon>Laurasiatheria</taxon>
        <taxon>Chiroptera</taxon>
        <taxon>Yangochiroptera</taxon>
        <taxon>Vespertilionidae</taxon>
        <taxon>Myotis</taxon>
    </lineage>
</organism>
<sequence length="379" mass="42695">MTNIRKSHPLMKIINSSFIDLPAPSNISSWWNFGSLLGICLALQILTGLFLAMHYTSDTATAFNSVTHICRDVNYGWILRYLHANGASMFFICLYLHVGRGLYYGSYMYTETWNIGVILLFAVMATAFMGYVLPWGQMSFWGATVITNLLSAIPYIGTDLVEWIWGGFSVDKATLTRFFAFHFLLPFIIAAMVMVHLLFLHETGSNNPTGIPSNADMIPFHPYYTIKDILGLLLMIVVLLTLVLFSPDLLGDPDNYTPANPLNTXPHIKPEWYFLFAYAILRSIPNKLGGVLALILSILILIIIPLLHTSKQRSMSFRPLSQCLFWLLAADLLTLTWIGGQPVEHPYVIIGQLASILYFSIIIILMPLTSLVENHLLKW</sequence>
<name>CYB_MYOMO</name>